<organism>
    <name type="scientific">Drosophila melanogaster</name>
    <name type="common">Fruit fly</name>
    <dbReference type="NCBI Taxonomy" id="7227"/>
    <lineage>
        <taxon>Eukaryota</taxon>
        <taxon>Metazoa</taxon>
        <taxon>Ecdysozoa</taxon>
        <taxon>Arthropoda</taxon>
        <taxon>Hexapoda</taxon>
        <taxon>Insecta</taxon>
        <taxon>Pterygota</taxon>
        <taxon>Neoptera</taxon>
        <taxon>Endopterygota</taxon>
        <taxon>Diptera</taxon>
        <taxon>Brachycera</taxon>
        <taxon>Muscomorpha</taxon>
        <taxon>Ephydroidea</taxon>
        <taxon>Drosophilidae</taxon>
        <taxon>Drosophila</taxon>
        <taxon>Sophophora</taxon>
    </lineage>
</organism>
<reference key="1">
    <citation type="journal article" date="2002" name="Mol. Cell">
        <title>PR-Set7 is a nucleosome-specific methyltransferase that modifies lysine 20 of histone H4 and is associated with silent chromatin.</title>
        <authorList>
            <person name="Nishioka K."/>
            <person name="Rice J.C."/>
            <person name="Sarma K."/>
            <person name="Erdjument-Bromage H."/>
            <person name="Werner J."/>
            <person name="Wang Y."/>
            <person name="Chuikov S."/>
            <person name="Valenzuela P."/>
            <person name="Tempst P."/>
            <person name="Steward R."/>
            <person name="Lis J.T."/>
            <person name="Allis C.D."/>
            <person name="Reinberg D."/>
        </authorList>
    </citation>
    <scope>NUCLEOTIDE SEQUENCE [MRNA]</scope>
    <scope>FUNCTION</scope>
    <scope>SUBCELLULAR LOCATION</scope>
</reference>
<reference key="2">
    <citation type="journal article" date="2000" name="Science">
        <title>The genome sequence of Drosophila melanogaster.</title>
        <authorList>
            <person name="Adams M.D."/>
            <person name="Celniker S.E."/>
            <person name="Holt R.A."/>
            <person name="Evans C.A."/>
            <person name="Gocayne J.D."/>
            <person name="Amanatides P.G."/>
            <person name="Scherer S.E."/>
            <person name="Li P.W."/>
            <person name="Hoskins R.A."/>
            <person name="Galle R.F."/>
            <person name="George R.A."/>
            <person name="Lewis S.E."/>
            <person name="Richards S."/>
            <person name="Ashburner M."/>
            <person name="Henderson S.N."/>
            <person name="Sutton G.G."/>
            <person name="Wortman J.R."/>
            <person name="Yandell M.D."/>
            <person name="Zhang Q."/>
            <person name="Chen L.X."/>
            <person name="Brandon R.C."/>
            <person name="Rogers Y.-H.C."/>
            <person name="Blazej R.G."/>
            <person name="Champe M."/>
            <person name="Pfeiffer B.D."/>
            <person name="Wan K.H."/>
            <person name="Doyle C."/>
            <person name="Baxter E.G."/>
            <person name="Helt G."/>
            <person name="Nelson C.R."/>
            <person name="Miklos G.L.G."/>
            <person name="Abril J.F."/>
            <person name="Agbayani A."/>
            <person name="An H.-J."/>
            <person name="Andrews-Pfannkoch C."/>
            <person name="Baldwin D."/>
            <person name="Ballew R.M."/>
            <person name="Basu A."/>
            <person name="Baxendale J."/>
            <person name="Bayraktaroglu L."/>
            <person name="Beasley E.M."/>
            <person name="Beeson K.Y."/>
            <person name="Benos P.V."/>
            <person name="Berman B.P."/>
            <person name="Bhandari D."/>
            <person name="Bolshakov S."/>
            <person name="Borkova D."/>
            <person name="Botchan M.R."/>
            <person name="Bouck J."/>
            <person name="Brokstein P."/>
            <person name="Brottier P."/>
            <person name="Burtis K.C."/>
            <person name="Busam D.A."/>
            <person name="Butler H."/>
            <person name="Cadieu E."/>
            <person name="Center A."/>
            <person name="Chandra I."/>
            <person name="Cherry J.M."/>
            <person name="Cawley S."/>
            <person name="Dahlke C."/>
            <person name="Davenport L.B."/>
            <person name="Davies P."/>
            <person name="de Pablos B."/>
            <person name="Delcher A."/>
            <person name="Deng Z."/>
            <person name="Mays A.D."/>
            <person name="Dew I."/>
            <person name="Dietz S.M."/>
            <person name="Dodson K."/>
            <person name="Doup L.E."/>
            <person name="Downes M."/>
            <person name="Dugan-Rocha S."/>
            <person name="Dunkov B.C."/>
            <person name="Dunn P."/>
            <person name="Durbin K.J."/>
            <person name="Evangelista C.C."/>
            <person name="Ferraz C."/>
            <person name="Ferriera S."/>
            <person name="Fleischmann W."/>
            <person name="Fosler C."/>
            <person name="Gabrielian A.E."/>
            <person name="Garg N.S."/>
            <person name="Gelbart W.M."/>
            <person name="Glasser K."/>
            <person name="Glodek A."/>
            <person name="Gong F."/>
            <person name="Gorrell J.H."/>
            <person name="Gu Z."/>
            <person name="Guan P."/>
            <person name="Harris M."/>
            <person name="Harris N.L."/>
            <person name="Harvey D.A."/>
            <person name="Heiman T.J."/>
            <person name="Hernandez J.R."/>
            <person name="Houck J."/>
            <person name="Hostin D."/>
            <person name="Houston K.A."/>
            <person name="Howland T.J."/>
            <person name="Wei M.-H."/>
            <person name="Ibegwam C."/>
            <person name="Jalali M."/>
            <person name="Kalush F."/>
            <person name="Karpen G.H."/>
            <person name="Ke Z."/>
            <person name="Kennison J.A."/>
            <person name="Ketchum K.A."/>
            <person name="Kimmel B.E."/>
            <person name="Kodira C.D."/>
            <person name="Kraft C.L."/>
            <person name="Kravitz S."/>
            <person name="Kulp D."/>
            <person name="Lai Z."/>
            <person name="Lasko P."/>
            <person name="Lei Y."/>
            <person name="Levitsky A.A."/>
            <person name="Li J.H."/>
            <person name="Li Z."/>
            <person name="Liang Y."/>
            <person name="Lin X."/>
            <person name="Liu X."/>
            <person name="Mattei B."/>
            <person name="McIntosh T.C."/>
            <person name="McLeod M.P."/>
            <person name="McPherson D."/>
            <person name="Merkulov G."/>
            <person name="Milshina N.V."/>
            <person name="Mobarry C."/>
            <person name="Morris J."/>
            <person name="Moshrefi A."/>
            <person name="Mount S.M."/>
            <person name="Moy M."/>
            <person name="Murphy B."/>
            <person name="Murphy L."/>
            <person name="Muzny D.M."/>
            <person name="Nelson D.L."/>
            <person name="Nelson D.R."/>
            <person name="Nelson K.A."/>
            <person name="Nixon K."/>
            <person name="Nusskern D.R."/>
            <person name="Pacleb J.M."/>
            <person name="Palazzolo M."/>
            <person name="Pittman G.S."/>
            <person name="Pan S."/>
            <person name="Pollard J."/>
            <person name="Puri V."/>
            <person name="Reese M.G."/>
            <person name="Reinert K."/>
            <person name="Remington K."/>
            <person name="Saunders R.D.C."/>
            <person name="Scheeler F."/>
            <person name="Shen H."/>
            <person name="Shue B.C."/>
            <person name="Siden-Kiamos I."/>
            <person name="Simpson M."/>
            <person name="Skupski M.P."/>
            <person name="Smith T.J."/>
            <person name="Spier E."/>
            <person name="Spradling A.C."/>
            <person name="Stapleton M."/>
            <person name="Strong R."/>
            <person name="Sun E."/>
            <person name="Svirskas R."/>
            <person name="Tector C."/>
            <person name="Turner R."/>
            <person name="Venter E."/>
            <person name="Wang A.H."/>
            <person name="Wang X."/>
            <person name="Wang Z.-Y."/>
            <person name="Wassarman D.A."/>
            <person name="Weinstock G.M."/>
            <person name="Weissenbach J."/>
            <person name="Williams S.M."/>
            <person name="Woodage T."/>
            <person name="Worley K.C."/>
            <person name="Wu D."/>
            <person name="Yang S."/>
            <person name="Yao Q.A."/>
            <person name="Ye J."/>
            <person name="Yeh R.-F."/>
            <person name="Zaveri J.S."/>
            <person name="Zhan M."/>
            <person name="Zhang G."/>
            <person name="Zhao Q."/>
            <person name="Zheng L."/>
            <person name="Zheng X.H."/>
            <person name="Zhong F.N."/>
            <person name="Zhong W."/>
            <person name="Zhou X."/>
            <person name="Zhu S.C."/>
            <person name="Zhu X."/>
            <person name="Smith H.O."/>
            <person name="Gibbs R.A."/>
            <person name="Myers E.W."/>
            <person name="Rubin G.M."/>
            <person name="Venter J.C."/>
        </authorList>
    </citation>
    <scope>NUCLEOTIDE SEQUENCE [LARGE SCALE GENOMIC DNA]</scope>
    <source>
        <strain>Berkeley</strain>
    </source>
</reference>
<reference key="3">
    <citation type="journal article" date="2002" name="Genome Biol.">
        <title>Annotation of the Drosophila melanogaster euchromatic genome: a systematic review.</title>
        <authorList>
            <person name="Misra S."/>
            <person name="Crosby M.A."/>
            <person name="Mungall C.J."/>
            <person name="Matthews B.B."/>
            <person name="Campbell K.S."/>
            <person name="Hradecky P."/>
            <person name="Huang Y."/>
            <person name="Kaminker J.S."/>
            <person name="Millburn G.H."/>
            <person name="Prochnik S.E."/>
            <person name="Smith C.D."/>
            <person name="Tupy J.L."/>
            <person name="Whitfield E.J."/>
            <person name="Bayraktaroglu L."/>
            <person name="Berman B.P."/>
            <person name="Bettencourt B.R."/>
            <person name="Celniker S.E."/>
            <person name="de Grey A.D.N.J."/>
            <person name="Drysdale R.A."/>
            <person name="Harris N.L."/>
            <person name="Richter J."/>
            <person name="Russo S."/>
            <person name="Schroeder A.J."/>
            <person name="Shu S.Q."/>
            <person name="Stapleton M."/>
            <person name="Yamada C."/>
            <person name="Ashburner M."/>
            <person name="Gelbart W.M."/>
            <person name="Rubin G.M."/>
            <person name="Lewis S.E."/>
        </authorList>
    </citation>
    <scope>GENOME REANNOTATION</scope>
    <source>
        <strain>Berkeley</strain>
    </source>
</reference>
<reference key="4">
    <citation type="journal article" date="2002" name="Genome Biol.">
        <title>A Drosophila full-length cDNA resource.</title>
        <authorList>
            <person name="Stapleton M."/>
            <person name="Carlson J.W."/>
            <person name="Brokstein P."/>
            <person name="Yu C."/>
            <person name="Champe M."/>
            <person name="George R.A."/>
            <person name="Guarin H."/>
            <person name="Kronmiller B."/>
            <person name="Pacleb J.M."/>
            <person name="Park S."/>
            <person name="Wan K.H."/>
            <person name="Rubin G.M."/>
            <person name="Celniker S.E."/>
        </authorList>
    </citation>
    <scope>NUCLEOTIDE SEQUENCE [LARGE SCALE MRNA]</scope>
    <source>
        <strain>Berkeley</strain>
    </source>
</reference>
<reference key="5">
    <citation type="journal article" date="2002" name="Curr. Biol.">
        <title>Purification and functional characterization of SET8, a nucleosomal histone H4-lysine 20-specific methyltransferase.</title>
        <authorList>
            <person name="Fang J."/>
            <person name="Feng Q."/>
            <person name="Ketel C.S."/>
            <person name="Wang H."/>
            <person name="Cao R."/>
            <person name="Xia L."/>
            <person name="Erdjument-Bromage H."/>
            <person name="Tempst P."/>
            <person name="Simon J.A."/>
            <person name="Zhang Y."/>
        </authorList>
    </citation>
    <scope>FUNCTION</scope>
    <scope>CATALYTIC ACTIVITY</scope>
    <scope>SUBCELLULAR LOCATION</scope>
</reference>
<reference key="6">
    <citation type="journal article" date="2005" name="Genes Dev.">
        <title>PR-Set7-dependent methylation of histone H4 Lys 20 functions in repression of gene expression and is essential for mitosis.</title>
        <authorList>
            <person name="Karachentsev D."/>
            <person name="Sarma K."/>
            <person name="Reinberg D."/>
            <person name="Steward R."/>
        </authorList>
    </citation>
    <scope>FUNCTION</scope>
    <scope>SUBCELLULAR LOCATION</scope>
    <scope>DEVELOPMENTAL STAGE</scope>
</reference>
<reference key="7">
    <citation type="journal article" date="2007" name="J. Cell Biol.">
        <title>Aberrant monomethylation of histone H4 lysine 20 activates the DNA damage checkpoint in Drosophila melanogaster.</title>
        <authorList>
            <person name="Sakaguchi A."/>
            <person name="Steward R."/>
        </authorList>
    </citation>
    <scope>FUNCTION</scope>
</reference>
<reference key="8">
    <citation type="journal article" date="2008" name="J. Proteome Res.">
        <title>Phosphoproteome analysis of Drosophila melanogaster embryos.</title>
        <authorList>
            <person name="Zhai B."/>
            <person name="Villen J."/>
            <person name="Beausoleil S.A."/>
            <person name="Mintseris J."/>
            <person name="Gygi S.P."/>
        </authorList>
    </citation>
    <scope>PHOSPHORYLATION [LARGE SCALE ANALYSIS] AT SER-195; SER-250; THR-252; SER-281; THR-344; SER-346; SER-383; SER-388 AND SER-392</scope>
    <scope>IDENTIFICATION BY MASS SPECTROMETRY</scope>
    <source>
        <tissue>Embryo</tissue>
    </source>
</reference>
<comment type="function">
    <text evidence="4 5 6 7">Histone methyltransferase that specifically monomethylates 'Lys-20' of histone H4. H4 'Lys-20' monomethylation is enriched during mitosis and represents a specific tag for epigenetic transcriptional repression. Mainly functions in euchromatin regions, thereby playing a central role in the silencing of euchromatic genes. Required for cell proliferation, possibly by contributing to the maintenance of proper higher-order structure of DNA and chromosome condensation during mitosis.</text>
</comment>
<comment type="catalytic activity">
    <reaction evidence="2 5">
        <text>L-lysyl(20)-[histone H4] + S-adenosyl-L-methionine = N(6)-methyl-L-lysyl(20)-[histone H4] + S-adenosyl-L-homocysteine + H(+)</text>
        <dbReference type="Rhea" id="RHEA:60344"/>
        <dbReference type="Rhea" id="RHEA-COMP:15554"/>
        <dbReference type="Rhea" id="RHEA-COMP:15555"/>
        <dbReference type="ChEBI" id="CHEBI:15378"/>
        <dbReference type="ChEBI" id="CHEBI:29969"/>
        <dbReference type="ChEBI" id="CHEBI:57856"/>
        <dbReference type="ChEBI" id="CHEBI:59789"/>
        <dbReference type="ChEBI" id="CHEBI:61929"/>
        <dbReference type="EC" id="2.1.1.361"/>
    </reaction>
</comment>
<comment type="subcellular location">
    <subcellularLocation>
        <location>Nucleus</location>
    </subcellularLocation>
    <subcellularLocation>
        <location>Chromosome</location>
    </subcellularLocation>
    <text>Specifically localizes to mitotic chromosomes. Associates to chromatin-dense and transcriptionally silent euchromatic regions.</text>
</comment>
<comment type="developmental stage">
    <text evidence="6">Present in ovary, early embryos and throughout the development (at protein level). Deposed in the egg during oogenesis.</text>
</comment>
<comment type="similarity">
    <text evidence="2">Belongs to the class V-like SAM-binding methyltransferase superfamily. Histone-lysine methyltransferase family. PR/SET subfamily.</text>
</comment>
<accession>Q9VFK6</accession>
<accession>Q53ZQ8</accession>
<dbReference type="EC" id="2.1.1.361" evidence="5"/>
<dbReference type="EMBL" id="AY283060">
    <property type="protein sequence ID" value="AAP35083.1"/>
    <property type="molecule type" value="mRNA"/>
</dbReference>
<dbReference type="EMBL" id="AE014297">
    <property type="protein sequence ID" value="AAF55047.2"/>
    <property type="molecule type" value="Genomic_DNA"/>
</dbReference>
<dbReference type="EMBL" id="AE014297">
    <property type="protein sequence ID" value="AAN13605.1"/>
    <property type="molecule type" value="Genomic_DNA"/>
</dbReference>
<dbReference type="EMBL" id="AE014297">
    <property type="protein sequence ID" value="AAN13606.1"/>
    <property type="molecule type" value="Genomic_DNA"/>
</dbReference>
<dbReference type="EMBL" id="AY102673">
    <property type="protein sequence ID" value="AAM27502.1"/>
    <property type="molecule type" value="mRNA"/>
</dbReference>
<dbReference type="RefSeq" id="NP_001247100.1">
    <property type="nucleotide sequence ID" value="NM_001260171.2"/>
</dbReference>
<dbReference type="RefSeq" id="NP_650354.1">
    <property type="nucleotide sequence ID" value="NM_142097.4"/>
</dbReference>
<dbReference type="RefSeq" id="NP_731900.1">
    <property type="nucleotide sequence ID" value="NM_169577.3"/>
</dbReference>
<dbReference type="SMR" id="Q9VFK6"/>
<dbReference type="BioGRID" id="66819">
    <property type="interactions" value="12"/>
</dbReference>
<dbReference type="FunCoup" id="Q9VFK6">
    <property type="interactions" value="479"/>
</dbReference>
<dbReference type="IntAct" id="Q9VFK6">
    <property type="interactions" value="2"/>
</dbReference>
<dbReference type="MINT" id="Q9VFK6"/>
<dbReference type="STRING" id="7227.FBpp0082389"/>
<dbReference type="BindingDB" id="Q9VFK6"/>
<dbReference type="ChEMBL" id="CHEMBL2169717"/>
<dbReference type="GlyGen" id="Q9VFK6">
    <property type="glycosylation" value="1 site"/>
</dbReference>
<dbReference type="iPTMnet" id="Q9VFK6"/>
<dbReference type="PaxDb" id="7227-FBpp0082387"/>
<dbReference type="DNASU" id="41743"/>
<dbReference type="EnsemblMetazoa" id="FBtr0082929">
    <property type="protein sequence ID" value="FBpp0082388"/>
    <property type="gene ID" value="FBgn0011474"/>
</dbReference>
<dbReference type="EnsemblMetazoa" id="FBtr0082930">
    <property type="protein sequence ID" value="FBpp0082389"/>
    <property type="gene ID" value="FBgn0011474"/>
</dbReference>
<dbReference type="EnsemblMetazoa" id="FBtr0309996">
    <property type="protein sequence ID" value="FBpp0301702"/>
    <property type="gene ID" value="FBgn0011474"/>
</dbReference>
<dbReference type="GeneID" id="41743"/>
<dbReference type="KEGG" id="dme:Dmel_CG3307"/>
<dbReference type="UCSC" id="CG3307-RA">
    <property type="organism name" value="d. melanogaster"/>
</dbReference>
<dbReference type="AGR" id="FB:FBgn0011474"/>
<dbReference type="CTD" id="41743"/>
<dbReference type="FlyBase" id="FBgn0011474">
    <property type="gene designation" value="Set8"/>
</dbReference>
<dbReference type="VEuPathDB" id="VectorBase:FBgn0011474"/>
<dbReference type="eggNOG" id="KOG1085">
    <property type="taxonomic scope" value="Eukaryota"/>
</dbReference>
<dbReference type="GeneTree" id="ENSGT00940000163293"/>
<dbReference type="HOGENOM" id="CLU_025411_0_0_1"/>
<dbReference type="InParanoid" id="Q9VFK6"/>
<dbReference type="OMA" id="HKNQQYC"/>
<dbReference type="OrthoDB" id="5560686at2759"/>
<dbReference type="PhylomeDB" id="Q9VFK6"/>
<dbReference type="BRENDA" id="2.1.1.361">
    <property type="organism ID" value="1994"/>
</dbReference>
<dbReference type="Reactome" id="R-DME-2299718">
    <property type="pathway name" value="Condensation of Prophase Chromosomes"/>
</dbReference>
<dbReference type="Reactome" id="R-DME-3214841">
    <property type="pathway name" value="PKMTs methylate histone lysines"/>
</dbReference>
<dbReference type="Reactome" id="R-DME-6804760">
    <property type="pathway name" value="Regulation of TP53 Activity through Methylation"/>
</dbReference>
<dbReference type="BioGRID-ORCS" id="41743">
    <property type="hits" value="1 hit in 1 CRISPR screen"/>
</dbReference>
<dbReference type="GenomeRNAi" id="41743"/>
<dbReference type="PRO" id="PR:Q9VFK6"/>
<dbReference type="Proteomes" id="UP000000803">
    <property type="component" value="Chromosome 3R"/>
</dbReference>
<dbReference type="Bgee" id="FBgn0011474">
    <property type="expression patterns" value="Expressed in spermatogonium in testis and 206 other cell types or tissues"/>
</dbReference>
<dbReference type="ExpressionAtlas" id="Q9VFK6">
    <property type="expression patterns" value="baseline and differential"/>
</dbReference>
<dbReference type="GO" id="GO:0005634">
    <property type="term" value="C:nucleus"/>
    <property type="evidence" value="ECO:0000318"/>
    <property type="project" value="GO_Central"/>
</dbReference>
<dbReference type="GO" id="GO:0005700">
    <property type="term" value="C:polytene chromosome"/>
    <property type="evidence" value="ECO:0000314"/>
    <property type="project" value="FlyBase"/>
</dbReference>
<dbReference type="GO" id="GO:0042799">
    <property type="term" value="F:histone H4K20 methyltransferase activity"/>
    <property type="evidence" value="ECO:0000315"/>
    <property type="project" value="FlyBase"/>
</dbReference>
<dbReference type="GO" id="GO:0140944">
    <property type="term" value="F:histone H4K20 monomethyltransferase activity"/>
    <property type="evidence" value="ECO:0000315"/>
    <property type="project" value="FlyBase"/>
</dbReference>
<dbReference type="GO" id="GO:0051301">
    <property type="term" value="P:cell division"/>
    <property type="evidence" value="ECO:0007669"/>
    <property type="project" value="UniProtKB-KW"/>
</dbReference>
<dbReference type="GO" id="GO:0030261">
    <property type="term" value="P:chromosome condensation"/>
    <property type="evidence" value="ECO:0000314"/>
    <property type="project" value="FlyBase"/>
</dbReference>
<dbReference type="GO" id="GO:0000077">
    <property type="term" value="P:DNA damage checkpoint signaling"/>
    <property type="evidence" value="ECO:0000314"/>
    <property type="project" value="FlyBase"/>
</dbReference>
<dbReference type="GO" id="GO:0031507">
    <property type="term" value="P:heterochromatin formation"/>
    <property type="evidence" value="ECO:0000315"/>
    <property type="project" value="FlyBase"/>
</dbReference>
<dbReference type="GO" id="GO:0032259">
    <property type="term" value="P:methylation"/>
    <property type="evidence" value="ECO:0007669"/>
    <property type="project" value="UniProtKB-KW"/>
</dbReference>
<dbReference type="GO" id="GO:0043516">
    <property type="term" value="P:regulation of DNA damage response, signal transduction by p53 class mediator"/>
    <property type="evidence" value="ECO:0000318"/>
    <property type="project" value="GO_Central"/>
</dbReference>
<dbReference type="GO" id="GO:0006357">
    <property type="term" value="P:regulation of transcription by RNA polymerase II"/>
    <property type="evidence" value="ECO:0000318"/>
    <property type="project" value="GO_Central"/>
</dbReference>
<dbReference type="CDD" id="cd10528">
    <property type="entry name" value="SET_SETD8"/>
    <property type="match status" value="1"/>
</dbReference>
<dbReference type="FunFam" id="2.170.270.10:FF:000053">
    <property type="entry name" value="Histone-lysine N-methyltransferase"/>
    <property type="match status" value="1"/>
</dbReference>
<dbReference type="Gene3D" id="2.170.270.10">
    <property type="entry name" value="SET domain"/>
    <property type="match status" value="1"/>
</dbReference>
<dbReference type="InterPro" id="IPR051760">
    <property type="entry name" value="KMT5A"/>
</dbReference>
<dbReference type="InterPro" id="IPR016858">
    <property type="entry name" value="KMT5A-like"/>
</dbReference>
<dbReference type="InterPro" id="IPR047266">
    <property type="entry name" value="KMT5A-like_SET"/>
</dbReference>
<dbReference type="InterPro" id="IPR001214">
    <property type="entry name" value="SET_dom"/>
</dbReference>
<dbReference type="InterPro" id="IPR046341">
    <property type="entry name" value="SET_dom_sf"/>
</dbReference>
<dbReference type="PANTHER" id="PTHR46167">
    <property type="entry name" value="N-LYSINE METHYLTRANSFERASE KMT5A"/>
    <property type="match status" value="1"/>
</dbReference>
<dbReference type="PANTHER" id="PTHR46167:SF1">
    <property type="entry name" value="N-LYSINE METHYLTRANSFERASE KMT5A"/>
    <property type="match status" value="1"/>
</dbReference>
<dbReference type="Pfam" id="PF00856">
    <property type="entry name" value="SET"/>
    <property type="match status" value="1"/>
</dbReference>
<dbReference type="SMART" id="SM00317">
    <property type="entry name" value="SET"/>
    <property type="match status" value="1"/>
</dbReference>
<dbReference type="SUPFAM" id="SSF82199">
    <property type="entry name" value="SET domain"/>
    <property type="match status" value="1"/>
</dbReference>
<dbReference type="PROSITE" id="PS51571">
    <property type="entry name" value="SAM_MT43_PR_SET"/>
    <property type="match status" value="1"/>
</dbReference>
<dbReference type="PROSITE" id="PS50280">
    <property type="entry name" value="SET"/>
    <property type="match status" value="1"/>
</dbReference>
<name>KMT5A_DROME</name>
<evidence type="ECO:0000255" key="1">
    <source>
        <dbReference type="PROSITE-ProRule" id="PRU00190"/>
    </source>
</evidence>
<evidence type="ECO:0000255" key="2">
    <source>
        <dbReference type="PROSITE-ProRule" id="PRU00904"/>
    </source>
</evidence>
<evidence type="ECO:0000256" key="3">
    <source>
        <dbReference type="SAM" id="MobiDB-lite"/>
    </source>
</evidence>
<evidence type="ECO:0000269" key="4">
    <source>
    </source>
</evidence>
<evidence type="ECO:0000269" key="5">
    <source>
    </source>
</evidence>
<evidence type="ECO:0000269" key="6">
    <source>
    </source>
</evidence>
<evidence type="ECO:0000269" key="7">
    <source>
    </source>
</evidence>
<evidence type="ECO:0000269" key="8">
    <source>
    </source>
</evidence>
<evidence type="ECO:0000303" key="9">
    <source>
    </source>
</evidence>
<evidence type="ECO:0000303" key="10">
    <source>
    </source>
</evidence>
<evidence type="ECO:0000312" key="11">
    <source>
        <dbReference type="FlyBase" id="FBgn0011474"/>
    </source>
</evidence>
<feature type="chain" id="PRO_0000186082" description="Histone-lysine N-methyltransferase Set8">
    <location>
        <begin position="1"/>
        <end position="691"/>
    </location>
</feature>
<feature type="domain" description="SET" evidence="1">
    <location>
        <begin position="555"/>
        <end position="676"/>
    </location>
</feature>
<feature type="region of interest" description="Disordered" evidence="3">
    <location>
        <begin position="1"/>
        <end position="29"/>
    </location>
</feature>
<feature type="region of interest" description="Disordered" evidence="3">
    <location>
        <begin position="341"/>
        <end position="363"/>
    </location>
</feature>
<feature type="region of interest" description="Disordered" evidence="3">
    <location>
        <begin position="382"/>
        <end position="401"/>
    </location>
</feature>
<feature type="region of interest" description="Disordered" evidence="3">
    <location>
        <begin position="407"/>
        <end position="437"/>
    </location>
</feature>
<feature type="region of interest" description="Disordered" evidence="3">
    <location>
        <begin position="464"/>
        <end position="516"/>
    </location>
</feature>
<feature type="compositionally biased region" description="Low complexity" evidence="3">
    <location>
        <begin position="14"/>
        <end position="27"/>
    </location>
</feature>
<feature type="compositionally biased region" description="Polar residues" evidence="3">
    <location>
        <begin position="421"/>
        <end position="430"/>
    </location>
</feature>
<feature type="compositionally biased region" description="Polar residues" evidence="3">
    <location>
        <begin position="471"/>
        <end position="481"/>
    </location>
</feature>
<feature type="binding site" evidence="2">
    <location>
        <begin position="565"/>
        <end position="567"/>
    </location>
    <ligand>
        <name>S-adenosyl-L-methionine</name>
        <dbReference type="ChEBI" id="CHEBI:59789"/>
    </ligand>
</feature>
<feature type="binding site" evidence="1 2">
    <location>
        <position position="610"/>
    </location>
    <ligand>
        <name>S-adenosyl-L-methionine</name>
        <dbReference type="ChEBI" id="CHEBI:59789"/>
    </ligand>
</feature>
<feature type="binding site" evidence="2">
    <location>
        <begin position="637"/>
        <end position="638"/>
    </location>
    <ligand>
        <name>S-adenosyl-L-methionine</name>
        <dbReference type="ChEBI" id="CHEBI:59789"/>
    </ligand>
</feature>
<feature type="modified residue" description="Phosphoserine" evidence="8">
    <location>
        <position position="195"/>
    </location>
</feature>
<feature type="modified residue" description="Phosphoserine" evidence="8">
    <location>
        <position position="250"/>
    </location>
</feature>
<feature type="modified residue" description="Phosphothreonine" evidence="8">
    <location>
        <position position="252"/>
    </location>
</feature>
<feature type="modified residue" description="Phosphoserine" evidence="8">
    <location>
        <position position="281"/>
    </location>
</feature>
<feature type="modified residue" description="Phosphothreonine" evidence="8">
    <location>
        <position position="344"/>
    </location>
</feature>
<feature type="modified residue" description="Phosphoserine" evidence="8">
    <location>
        <position position="346"/>
    </location>
</feature>
<feature type="modified residue" description="Phosphoserine" evidence="8">
    <location>
        <position position="383"/>
    </location>
</feature>
<feature type="modified residue" description="Phosphoserine" evidence="8">
    <location>
        <position position="388"/>
    </location>
</feature>
<feature type="modified residue" description="Phosphoserine" evidence="8">
    <location>
        <position position="392"/>
    </location>
</feature>
<protein>
    <recommendedName>
        <fullName evidence="10">Histone-lysine N-methyltransferase Set8</fullName>
        <ecNumber evidence="5">2.1.1.361</ecNumber>
    </recommendedName>
    <alternativeName>
        <fullName>Lysine N-methyltransferase 5A</fullName>
    </alternativeName>
    <alternativeName>
        <fullName evidence="9">PR/SET domain-containing protein 07</fullName>
    </alternativeName>
    <alternativeName>
        <fullName evidence="10">dSET8</fullName>
    </alternativeName>
</protein>
<gene>
    <name evidence="10 11" type="primary">Set8</name>
    <name type="synonym">KMT5A</name>
    <name evidence="9" type="synonym">PR-Set7</name>
    <name evidence="11" type="ORF">CG3307</name>
</gene>
<sequence>MIMVRRRQRPAKEAASSSSGGASSGSGIPVDQALPLNVAGNLLEDQYFASPKRKDCRLMKVTQNGQLPEATMMAHNKDNKAGRTIGVPLATRSQTRTIENFFKANAAAKDSQKTIHTEEQLNLGNQELKLDDEELNGQIKLDDEVLKLADKQINENLPFADEVDAKAEQKLMDEELQQVVEELLFDGSSRASSNSPFYQHDMDVMQEIQQTPEIPHIKKVTEPLEGLGSLADFQTHRSALRDSHSSTHSSSTDNIFLQEPVLTLDIDRTPTKASSIKINRSFELAGAVFSSPPSVLNACLNGRFNQIVSLNGQKEALDLPHFDLDQHDSSSCDSGVACGLTANTESPAGQPRRRKPATPHRILCPSPIKTALKVTGGICKVGSADPLSPRKSPRKLPTTTAAVAACKSRRRLNQPKPQAPYQPQLQKPPSQQQQQQQDDIVVVLDDDDDEGDDEDDVRALIKAAEERENQNKAPATANSNKAGMKTMLKPAPVKSKTKSKGPTKGQPPLPLAATNGNREMTDFFPVRRSVRKTKTAVKEEWMRGLEQAVLEERCDGLQVRHFMGKGRGVVADRPFKRNEFVVEYVGDLISIGEAAEREKRYALDENAGCYMYYFKHKSQQYCIDATVDTGKLGRLINHSRAGNLMTKVVLIKQRPHLVLLAKDDIEPGEELTYDYGDRSKESLLHHPWLAF</sequence>
<keyword id="KW-0131">Cell cycle</keyword>
<keyword id="KW-0132">Cell division</keyword>
<keyword id="KW-0156">Chromatin regulator</keyword>
<keyword id="KW-0158">Chromosome</keyword>
<keyword id="KW-0489">Methyltransferase</keyword>
<keyword id="KW-0498">Mitosis</keyword>
<keyword id="KW-0539">Nucleus</keyword>
<keyword id="KW-0597">Phosphoprotein</keyword>
<keyword id="KW-1185">Reference proteome</keyword>
<keyword id="KW-0678">Repressor</keyword>
<keyword id="KW-0949">S-adenosyl-L-methionine</keyword>
<keyword id="KW-0804">Transcription</keyword>
<keyword id="KW-0805">Transcription regulation</keyword>
<keyword id="KW-0808">Transferase</keyword>
<proteinExistence type="evidence at protein level"/>